<keyword id="KW-0150">Chloroplast</keyword>
<keyword id="KW-0934">Plastid</keyword>
<keyword id="KW-0687">Ribonucleoprotein</keyword>
<keyword id="KW-0689">Ribosomal protein</keyword>
<protein>
    <recommendedName>
        <fullName evidence="1">Large ribosomal subunit protein bL12c</fullName>
    </recommendedName>
    <alternativeName>
        <fullName evidence="3">50S ribosomal protein L12, chloroplastic</fullName>
    </alternativeName>
</protein>
<feature type="chain" id="PRO_0000157618" description="Large ribosomal subunit protein bL12c">
    <location>
        <begin position="1"/>
        <end position="131"/>
    </location>
</feature>
<feature type="region of interest" description="Disordered" evidence="2">
    <location>
        <begin position="106"/>
        <end position="131"/>
    </location>
</feature>
<feature type="compositionally biased region" description="Basic and acidic residues" evidence="2">
    <location>
        <begin position="106"/>
        <end position="125"/>
    </location>
</feature>
<reference key="1">
    <citation type="journal article" date="2004" name="J. Mol. Evol.">
        <title>Comparative analysis of the complete plastid genome sequence of the red alga Gracilaria tenuistipitata var. liui provides insights into the evolution of rhodoplasts and their relationship to other plastids.</title>
        <authorList>
            <person name="Hagopian J.C."/>
            <person name="Reis M."/>
            <person name="Kitajima J.P."/>
            <person name="Bhattacharya D."/>
            <person name="de Oliveira M.C."/>
        </authorList>
    </citation>
    <scope>NUCLEOTIDE SEQUENCE [LARGE SCALE GENOMIC DNA]</scope>
</reference>
<name>RK12_GRATL</name>
<gene>
    <name evidence="1" type="primary">rpl12</name>
    <name type="ordered locus">Grc000049</name>
</gene>
<comment type="function">
    <text evidence="1">Forms part of the ribosomal stalk which helps the ribosome interact with GTP-bound translation factors. Is thus essential for accurate translation.</text>
</comment>
<comment type="subunit">
    <text evidence="1">Homodimer. Part of the ribosomal stalk of the 50S ribosomal subunit. Forms a multimeric L10(L12)X complex, where L10 forms an elongated spine to which 2 to 4 L12 dimers bind in a sequential fashion. Binds GTP-bound translation factors.</text>
</comment>
<comment type="subcellular location">
    <subcellularLocation>
        <location>Plastid</location>
        <location>Chloroplast</location>
    </subcellularLocation>
</comment>
<comment type="similarity">
    <text evidence="1">Belongs to the bacterial ribosomal protein bL12 family.</text>
</comment>
<dbReference type="EMBL" id="AY673996">
    <property type="protein sequence ID" value="AAT79630.1"/>
    <property type="molecule type" value="Genomic_DNA"/>
</dbReference>
<dbReference type="RefSeq" id="YP_063555.1">
    <property type="nucleotide sequence ID" value="NC_006137.1"/>
</dbReference>
<dbReference type="SMR" id="Q6B905"/>
<dbReference type="GeneID" id="2944036"/>
<dbReference type="GO" id="GO:0009507">
    <property type="term" value="C:chloroplast"/>
    <property type="evidence" value="ECO:0007669"/>
    <property type="project" value="UniProtKB-SubCell"/>
</dbReference>
<dbReference type="GO" id="GO:0022625">
    <property type="term" value="C:cytosolic large ribosomal subunit"/>
    <property type="evidence" value="ECO:0007669"/>
    <property type="project" value="TreeGrafter"/>
</dbReference>
<dbReference type="GO" id="GO:0003729">
    <property type="term" value="F:mRNA binding"/>
    <property type="evidence" value="ECO:0007669"/>
    <property type="project" value="TreeGrafter"/>
</dbReference>
<dbReference type="GO" id="GO:0003735">
    <property type="term" value="F:structural constituent of ribosome"/>
    <property type="evidence" value="ECO:0007669"/>
    <property type="project" value="InterPro"/>
</dbReference>
<dbReference type="GO" id="GO:0006412">
    <property type="term" value="P:translation"/>
    <property type="evidence" value="ECO:0007669"/>
    <property type="project" value="UniProtKB-UniRule"/>
</dbReference>
<dbReference type="CDD" id="cd00387">
    <property type="entry name" value="Ribosomal_L7_L12"/>
    <property type="match status" value="1"/>
</dbReference>
<dbReference type="FunFam" id="3.30.1390.10:FF:000001">
    <property type="entry name" value="50S ribosomal protein L7/L12"/>
    <property type="match status" value="1"/>
</dbReference>
<dbReference type="Gene3D" id="3.30.1390.10">
    <property type="match status" value="1"/>
</dbReference>
<dbReference type="Gene3D" id="1.20.5.710">
    <property type="entry name" value="Single helix bin"/>
    <property type="match status" value="1"/>
</dbReference>
<dbReference type="HAMAP" id="MF_00368">
    <property type="entry name" value="Ribosomal_bL12"/>
    <property type="match status" value="1"/>
</dbReference>
<dbReference type="InterPro" id="IPR000206">
    <property type="entry name" value="Ribosomal_bL12"/>
</dbReference>
<dbReference type="InterPro" id="IPR013823">
    <property type="entry name" value="Ribosomal_bL12_C"/>
</dbReference>
<dbReference type="InterPro" id="IPR014719">
    <property type="entry name" value="Ribosomal_bL12_C/ClpS-like"/>
</dbReference>
<dbReference type="InterPro" id="IPR008932">
    <property type="entry name" value="Ribosomal_bL12_oligo"/>
</dbReference>
<dbReference type="InterPro" id="IPR036235">
    <property type="entry name" value="Ribosomal_bL12_oligo_N_sf"/>
</dbReference>
<dbReference type="NCBIfam" id="TIGR00855">
    <property type="entry name" value="L12"/>
    <property type="match status" value="1"/>
</dbReference>
<dbReference type="PANTHER" id="PTHR45987">
    <property type="entry name" value="39S RIBOSOMAL PROTEIN L12"/>
    <property type="match status" value="1"/>
</dbReference>
<dbReference type="PANTHER" id="PTHR45987:SF4">
    <property type="entry name" value="LARGE RIBOSOMAL SUBUNIT PROTEIN BL12M"/>
    <property type="match status" value="1"/>
</dbReference>
<dbReference type="Pfam" id="PF00542">
    <property type="entry name" value="Ribosomal_L12"/>
    <property type="match status" value="1"/>
</dbReference>
<dbReference type="Pfam" id="PF16320">
    <property type="entry name" value="Ribosomal_L12_N"/>
    <property type="match status" value="1"/>
</dbReference>
<dbReference type="SUPFAM" id="SSF54736">
    <property type="entry name" value="ClpS-like"/>
    <property type="match status" value="1"/>
</dbReference>
<dbReference type="SUPFAM" id="SSF48300">
    <property type="entry name" value="Ribosomal protein L7/12, oligomerisation (N-terminal) domain"/>
    <property type="match status" value="1"/>
</dbReference>
<proteinExistence type="inferred from homology"/>
<sequence>MNTKITNIIEDLKSLTLLEAAELIKQIEETFDVDASITSQSQAIVMPTAVDNSNKNEIEEKTEFDIILEEVPAAKKIAILKVVRSITGLGLKEAKALVESAPKMIKDNTNKENSEEIKQQLEEAGAKVSIK</sequence>
<evidence type="ECO:0000255" key="1">
    <source>
        <dbReference type="HAMAP-Rule" id="MF_00368"/>
    </source>
</evidence>
<evidence type="ECO:0000256" key="2">
    <source>
        <dbReference type="SAM" id="MobiDB-lite"/>
    </source>
</evidence>
<evidence type="ECO:0000305" key="3"/>
<organism>
    <name type="scientific">Gracilaria tenuistipitata var. liui</name>
    <name type="common">Red alga</name>
    <dbReference type="NCBI Taxonomy" id="285951"/>
    <lineage>
        <taxon>Eukaryota</taxon>
        <taxon>Rhodophyta</taxon>
        <taxon>Florideophyceae</taxon>
        <taxon>Rhodymeniophycidae</taxon>
        <taxon>Gracilariales</taxon>
        <taxon>Gracilariaceae</taxon>
        <taxon>Gracilaria</taxon>
        <taxon>Gracilaria tenuistipitata</taxon>
    </lineage>
</organism>
<geneLocation type="chloroplast"/>
<accession>Q6B905</accession>